<keyword id="KW-0066">ATP synthesis</keyword>
<keyword id="KW-0067">ATP-binding</keyword>
<keyword id="KW-0997">Cell inner membrane</keyword>
<keyword id="KW-1003">Cell membrane</keyword>
<keyword id="KW-0139">CF(1)</keyword>
<keyword id="KW-0375">Hydrogen ion transport</keyword>
<keyword id="KW-0406">Ion transport</keyword>
<keyword id="KW-0472">Membrane</keyword>
<keyword id="KW-0547">Nucleotide-binding</keyword>
<keyword id="KW-1278">Translocase</keyword>
<keyword id="KW-0813">Transport</keyword>
<comment type="function">
    <text evidence="1">Produces ATP from ADP in the presence of a proton gradient across the membrane. The alpha chain is a regulatory subunit.</text>
</comment>
<comment type="catalytic activity">
    <reaction evidence="1">
        <text>ATP + H2O + 4 H(+)(in) = ADP + phosphate + 5 H(+)(out)</text>
        <dbReference type="Rhea" id="RHEA:57720"/>
        <dbReference type="ChEBI" id="CHEBI:15377"/>
        <dbReference type="ChEBI" id="CHEBI:15378"/>
        <dbReference type="ChEBI" id="CHEBI:30616"/>
        <dbReference type="ChEBI" id="CHEBI:43474"/>
        <dbReference type="ChEBI" id="CHEBI:456216"/>
        <dbReference type="EC" id="7.1.2.2"/>
    </reaction>
</comment>
<comment type="subunit">
    <text evidence="1">F-type ATPases have 2 components, CF(1) - the catalytic core - and CF(0) - the membrane proton channel. CF(1) has five subunits: alpha(3), beta(3), gamma(1), delta(1), epsilon(1). CF(0) has three main subunits: a(1), b(2) and c(9-12). The alpha and beta chains form an alternating ring which encloses part of the gamma chain. CF(1) is attached to CF(0) by a central stalk formed by the gamma and epsilon chains, while a peripheral stalk is formed by the delta and b chains.</text>
</comment>
<comment type="subcellular location">
    <subcellularLocation>
        <location evidence="1">Cell inner membrane</location>
        <topology evidence="1">Peripheral membrane protein</topology>
    </subcellularLocation>
</comment>
<comment type="similarity">
    <text evidence="1">Belongs to the ATPase alpha/beta chains family.</text>
</comment>
<organism>
    <name type="scientific">Nitratidesulfovibrio vulgaris (strain DP4)</name>
    <name type="common">Desulfovibrio vulgaris</name>
    <dbReference type="NCBI Taxonomy" id="391774"/>
    <lineage>
        <taxon>Bacteria</taxon>
        <taxon>Pseudomonadati</taxon>
        <taxon>Thermodesulfobacteriota</taxon>
        <taxon>Desulfovibrionia</taxon>
        <taxon>Desulfovibrionales</taxon>
        <taxon>Desulfovibrionaceae</taxon>
        <taxon>Nitratidesulfovibrio</taxon>
    </lineage>
</organism>
<proteinExistence type="inferred from homology"/>
<feature type="chain" id="PRO_0000302644" description="ATP synthase subunit alpha">
    <location>
        <begin position="1"/>
        <end position="502"/>
    </location>
</feature>
<feature type="binding site" evidence="1">
    <location>
        <begin position="169"/>
        <end position="176"/>
    </location>
    <ligand>
        <name>ATP</name>
        <dbReference type="ChEBI" id="CHEBI:30616"/>
    </ligand>
</feature>
<feature type="site" description="Required for activity" evidence="1">
    <location>
        <position position="362"/>
    </location>
</feature>
<name>ATPA_NITV4</name>
<gene>
    <name evidence="1" type="primary">atpA</name>
    <name type="ordered locus">Dvul_2193</name>
</gene>
<protein>
    <recommendedName>
        <fullName evidence="1">ATP synthase subunit alpha</fullName>
        <ecNumber evidence="1">7.1.2.2</ecNumber>
    </recommendedName>
    <alternativeName>
        <fullName evidence="1">ATP synthase F1 sector subunit alpha</fullName>
    </alternativeName>
    <alternativeName>
        <fullName evidence="1">F-ATPase subunit alpha</fullName>
    </alternativeName>
</protein>
<reference key="1">
    <citation type="journal article" date="2009" name="Environ. Microbiol.">
        <title>Contribution of mobile genetic elements to Desulfovibrio vulgaris genome plasticity.</title>
        <authorList>
            <person name="Walker C.B."/>
            <person name="Stolyar S."/>
            <person name="Chivian D."/>
            <person name="Pinel N."/>
            <person name="Gabster J.A."/>
            <person name="Dehal P.S."/>
            <person name="He Z."/>
            <person name="Yang Z.K."/>
            <person name="Yen H.C."/>
            <person name="Zhou J."/>
            <person name="Wall J.D."/>
            <person name="Hazen T.C."/>
            <person name="Arkin A.P."/>
            <person name="Stahl D.A."/>
        </authorList>
    </citation>
    <scope>NUCLEOTIDE SEQUENCE [LARGE SCALE GENOMIC DNA]</scope>
    <source>
        <strain>DP4</strain>
    </source>
</reference>
<sequence length="502" mass="54582">MQIKAEEISKIIEEQIQSYEQRVEMSETGTVLYVGDGIARVHGVQNAMAMELLEFPGGLMGMVLNLEEDNVGVALLGDDTQIKEGDPVKRTGKIFSVPVGDAVMGRVLNPLGQPIDGLGPLDAKEFRPVELKAPGIIARKSVHEPMPTGIKAIDAMTPIGRGQRELVIGDRQTGKTAVCIDAILAQKNTDIHCFYVAIGQKKATVALVADTLRKYGAMEYTTIISATASEPAPLQFISAYSGCTMAEFYRNNGKHALIIYDDLSKQAVAYRQMSLLLRRPPGREAYPGDVFYLHSRLLERAAKVNDSLGAGSLTALPIIETQAGDVSAYIPTNVISITDGQVYLEPNLFNAGIRPAINVGLSVSRVGGAAQIKAMKQVAGTMRLDLAQYRELAAFAQFGSDLDKATKAKLDRGARLVELLKQPQYEPMPTEEQVASMYAATRGLMDDVAVADIRKFETAMLDYLRSGKADILNDIKTKKALDQDIENRLKAAIAEFKKGYQA</sequence>
<accession>A1VFJ3</accession>
<evidence type="ECO:0000255" key="1">
    <source>
        <dbReference type="HAMAP-Rule" id="MF_01346"/>
    </source>
</evidence>
<dbReference type="EC" id="7.1.2.2" evidence="1"/>
<dbReference type="EMBL" id="CP000527">
    <property type="protein sequence ID" value="ABM29209.1"/>
    <property type="molecule type" value="Genomic_DNA"/>
</dbReference>
<dbReference type="RefSeq" id="WP_010938078.1">
    <property type="nucleotide sequence ID" value="NC_008751.1"/>
</dbReference>
<dbReference type="SMR" id="A1VFJ3"/>
<dbReference type="KEGG" id="dvl:Dvul_2193"/>
<dbReference type="HOGENOM" id="CLU_010091_2_1_7"/>
<dbReference type="Proteomes" id="UP000009173">
    <property type="component" value="Chromosome"/>
</dbReference>
<dbReference type="GO" id="GO:0005886">
    <property type="term" value="C:plasma membrane"/>
    <property type="evidence" value="ECO:0007669"/>
    <property type="project" value="UniProtKB-SubCell"/>
</dbReference>
<dbReference type="GO" id="GO:0045259">
    <property type="term" value="C:proton-transporting ATP synthase complex"/>
    <property type="evidence" value="ECO:0007669"/>
    <property type="project" value="UniProtKB-KW"/>
</dbReference>
<dbReference type="GO" id="GO:0043531">
    <property type="term" value="F:ADP binding"/>
    <property type="evidence" value="ECO:0007669"/>
    <property type="project" value="TreeGrafter"/>
</dbReference>
<dbReference type="GO" id="GO:0005524">
    <property type="term" value="F:ATP binding"/>
    <property type="evidence" value="ECO:0007669"/>
    <property type="project" value="UniProtKB-UniRule"/>
</dbReference>
<dbReference type="GO" id="GO:0046933">
    <property type="term" value="F:proton-transporting ATP synthase activity, rotational mechanism"/>
    <property type="evidence" value="ECO:0007669"/>
    <property type="project" value="UniProtKB-UniRule"/>
</dbReference>
<dbReference type="CDD" id="cd18113">
    <property type="entry name" value="ATP-synt_F1_alpha_C"/>
    <property type="match status" value="1"/>
</dbReference>
<dbReference type="CDD" id="cd18116">
    <property type="entry name" value="ATP-synt_F1_alpha_N"/>
    <property type="match status" value="1"/>
</dbReference>
<dbReference type="CDD" id="cd01132">
    <property type="entry name" value="F1-ATPase_alpha_CD"/>
    <property type="match status" value="1"/>
</dbReference>
<dbReference type="FunFam" id="1.20.150.20:FF:000001">
    <property type="entry name" value="ATP synthase subunit alpha"/>
    <property type="match status" value="1"/>
</dbReference>
<dbReference type="FunFam" id="2.40.30.20:FF:000001">
    <property type="entry name" value="ATP synthase subunit alpha"/>
    <property type="match status" value="1"/>
</dbReference>
<dbReference type="FunFam" id="3.40.50.300:FF:000002">
    <property type="entry name" value="ATP synthase subunit alpha"/>
    <property type="match status" value="1"/>
</dbReference>
<dbReference type="Gene3D" id="2.40.30.20">
    <property type="match status" value="1"/>
</dbReference>
<dbReference type="Gene3D" id="1.20.150.20">
    <property type="entry name" value="ATP synthase alpha/beta chain, C-terminal domain"/>
    <property type="match status" value="1"/>
</dbReference>
<dbReference type="Gene3D" id="3.40.50.300">
    <property type="entry name" value="P-loop containing nucleotide triphosphate hydrolases"/>
    <property type="match status" value="1"/>
</dbReference>
<dbReference type="HAMAP" id="MF_01346">
    <property type="entry name" value="ATP_synth_alpha_bact"/>
    <property type="match status" value="1"/>
</dbReference>
<dbReference type="InterPro" id="IPR023366">
    <property type="entry name" value="ATP_synth_asu-like_sf"/>
</dbReference>
<dbReference type="InterPro" id="IPR000793">
    <property type="entry name" value="ATP_synth_asu_C"/>
</dbReference>
<dbReference type="InterPro" id="IPR038376">
    <property type="entry name" value="ATP_synth_asu_C_sf"/>
</dbReference>
<dbReference type="InterPro" id="IPR033732">
    <property type="entry name" value="ATP_synth_F1_a_nt-bd_dom"/>
</dbReference>
<dbReference type="InterPro" id="IPR005294">
    <property type="entry name" value="ATP_synth_F1_asu"/>
</dbReference>
<dbReference type="InterPro" id="IPR020003">
    <property type="entry name" value="ATPase_a/bsu_AS"/>
</dbReference>
<dbReference type="InterPro" id="IPR004100">
    <property type="entry name" value="ATPase_F1/V1/A1_a/bsu_N"/>
</dbReference>
<dbReference type="InterPro" id="IPR036121">
    <property type="entry name" value="ATPase_F1/V1/A1_a/bsu_N_sf"/>
</dbReference>
<dbReference type="InterPro" id="IPR000194">
    <property type="entry name" value="ATPase_F1/V1/A1_a/bsu_nucl-bd"/>
</dbReference>
<dbReference type="InterPro" id="IPR027417">
    <property type="entry name" value="P-loop_NTPase"/>
</dbReference>
<dbReference type="NCBIfam" id="TIGR00962">
    <property type="entry name" value="atpA"/>
    <property type="match status" value="1"/>
</dbReference>
<dbReference type="NCBIfam" id="NF009884">
    <property type="entry name" value="PRK13343.1"/>
    <property type="match status" value="1"/>
</dbReference>
<dbReference type="PANTHER" id="PTHR48082">
    <property type="entry name" value="ATP SYNTHASE SUBUNIT ALPHA, MITOCHONDRIAL"/>
    <property type="match status" value="1"/>
</dbReference>
<dbReference type="PANTHER" id="PTHR48082:SF2">
    <property type="entry name" value="ATP SYNTHASE SUBUNIT ALPHA, MITOCHONDRIAL"/>
    <property type="match status" value="1"/>
</dbReference>
<dbReference type="Pfam" id="PF00006">
    <property type="entry name" value="ATP-synt_ab"/>
    <property type="match status" value="1"/>
</dbReference>
<dbReference type="Pfam" id="PF00306">
    <property type="entry name" value="ATP-synt_ab_C"/>
    <property type="match status" value="1"/>
</dbReference>
<dbReference type="Pfam" id="PF02874">
    <property type="entry name" value="ATP-synt_ab_N"/>
    <property type="match status" value="1"/>
</dbReference>
<dbReference type="PIRSF" id="PIRSF039088">
    <property type="entry name" value="F_ATPase_subunit_alpha"/>
    <property type="match status" value="1"/>
</dbReference>
<dbReference type="SUPFAM" id="SSF47917">
    <property type="entry name" value="C-terminal domain of alpha and beta subunits of F1 ATP synthase"/>
    <property type="match status" value="1"/>
</dbReference>
<dbReference type="SUPFAM" id="SSF50615">
    <property type="entry name" value="N-terminal domain of alpha and beta subunits of F1 ATP synthase"/>
    <property type="match status" value="1"/>
</dbReference>
<dbReference type="SUPFAM" id="SSF52540">
    <property type="entry name" value="P-loop containing nucleoside triphosphate hydrolases"/>
    <property type="match status" value="1"/>
</dbReference>
<dbReference type="PROSITE" id="PS00152">
    <property type="entry name" value="ATPASE_ALPHA_BETA"/>
    <property type="match status" value="1"/>
</dbReference>